<keyword id="KW-1003">Cell membrane</keyword>
<keyword id="KW-0961">Cell wall biogenesis/degradation</keyword>
<keyword id="KW-0968">Cytoplasmic vesicle</keyword>
<keyword id="KW-0325">Glycoprotein</keyword>
<keyword id="KW-0328">Glycosyltransferase</keyword>
<keyword id="KW-0472">Membrane</keyword>
<keyword id="KW-1185">Reference proteome</keyword>
<keyword id="KW-0808">Transferase</keyword>
<keyword id="KW-0812">Transmembrane</keyword>
<keyword id="KW-1133">Transmembrane helix</keyword>
<sequence>MSYDAYQMRPGQGRDYARQQRQQRSYQLSDDPLRQPGAPYANPAGGYPSSASMNPENPFYAAENPSFQTLAPATSEGHATYTYEEDKIPLTDSADEKYGFSQNGHSTYNLASQSGFPPSTPCGGPSSYSSALGPEDSASQVAWAKRQQAPKRGLTKKIQLTRGHWIVDHPVPTAVKNSVESRWSQGNRTQEFTHMRYTAATCDPDEFTLENGWSLRTSQQYGRDTELLIAITYYNEDRILLARTLHGVMLNIRDICKSKSSKFWRRSAEEGRPGWQRIVVSLIFDGIDPCDKEVLDLLATVGVYQDGVMKRKVDGKDTVAHLFEYTTQLSVDPTPALIQPHADDASNLVPVQMIFCLKQKNSKKINSHRWLFNALGRHLQPELCVLIDAGTKPGHKSLYYLWEAFYNNANLGGACGEIHAMIKNGRKLINPLVAAQNFEYKMSNILDKPLESTFGYVSVLPGAFSAYRFRAIQGRPLQQYFHGDHTLADRLGKKGLHGMDIFTKNMFLAEDRILCFELVAKAGDKWTLTYVKPSKGETDVPEGAAELISQRRRWLNGSFAASIYSLVHFFRIYKSNHGIIRLFFLHIQALYNAIVLLFSWFALANLWLTFSIIIEFLPDELLKNSSHTTLVVFHWINQAAKWIYVFFLVLQFVLALGNRPKGEKPTYIASFIVFGILGLYLIFVSLWLTLKALLETSVSGNIWHTLFNQTTGVLIAALAATFGIYLIASILYADPWHMVTSFPQYMMIAPSFINILNVYAFCNLHDVSWGTKGSDKADALPTVDTKKDKSTEPGTVEEIERHQDDIDETFKAVVSRAVAPFKPAETVEKPTMDDSNKTFRTRLVAFWLLTNGALTVAIENVNGLNTGLTNKQIEQQQSSKQSTYFRIILWATFGLSAFRFIGCLIYWVKRNSTRCFRKT</sequence>
<reference key="1">
    <citation type="journal article" date="2006" name="Nature">
        <title>Insights from the genome of the biotrophic fungal plant pathogen Ustilago maydis.</title>
        <authorList>
            <person name="Kaemper J."/>
            <person name="Kahmann R."/>
            <person name="Boelker M."/>
            <person name="Ma L.-J."/>
            <person name="Brefort T."/>
            <person name="Saville B.J."/>
            <person name="Banuett F."/>
            <person name="Kronstad J.W."/>
            <person name="Gold S.E."/>
            <person name="Mueller O."/>
            <person name="Perlin M.H."/>
            <person name="Woesten H.A.B."/>
            <person name="de Vries R."/>
            <person name="Ruiz-Herrera J."/>
            <person name="Reynaga-Pena C.G."/>
            <person name="Snetselaar K."/>
            <person name="McCann M."/>
            <person name="Perez-Martin J."/>
            <person name="Feldbruegge M."/>
            <person name="Basse C.W."/>
            <person name="Steinberg G."/>
            <person name="Ibeas J.I."/>
            <person name="Holloman W."/>
            <person name="Guzman P."/>
            <person name="Farman M.L."/>
            <person name="Stajich J.E."/>
            <person name="Sentandreu R."/>
            <person name="Gonzalez-Prieto J.M."/>
            <person name="Kennell J.C."/>
            <person name="Molina L."/>
            <person name="Schirawski J."/>
            <person name="Mendoza-Mendoza A."/>
            <person name="Greilinger D."/>
            <person name="Muench K."/>
            <person name="Roessel N."/>
            <person name="Scherer M."/>
            <person name="Vranes M."/>
            <person name="Ladendorf O."/>
            <person name="Vincon V."/>
            <person name="Fuchs U."/>
            <person name="Sandrock B."/>
            <person name="Meng S."/>
            <person name="Ho E.C.H."/>
            <person name="Cahill M.J."/>
            <person name="Boyce K.J."/>
            <person name="Klose J."/>
            <person name="Klosterman S.J."/>
            <person name="Deelstra H.J."/>
            <person name="Ortiz-Castellanos L."/>
            <person name="Li W."/>
            <person name="Sanchez-Alonso P."/>
            <person name="Schreier P.H."/>
            <person name="Haeuser-Hahn I."/>
            <person name="Vaupel M."/>
            <person name="Koopmann E."/>
            <person name="Friedrich G."/>
            <person name="Voss H."/>
            <person name="Schlueter T."/>
            <person name="Margolis J."/>
            <person name="Platt D."/>
            <person name="Swimmer C."/>
            <person name="Gnirke A."/>
            <person name="Chen F."/>
            <person name="Vysotskaia V."/>
            <person name="Mannhaupt G."/>
            <person name="Gueldener U."/>
            <person name="Muensterkoetter M."/>
            <person name="Haase D."/>
            <person name="Oesterheld M."/>
            <person name="Mewes H.-W."/>
            <person name="Mauceli E.W."/>
            <person name="DeCaprio D."/>
            <person name="Wade C.M."/>
            <person name="Butler J."/>
            <person name="Young S.K."/>
            <person name="Jaffe D.B."/>
            <person name="Calvo S.E."/>
            <person name="Nusbaum C."/>
            <person name="Galagan J.E."/>
            <person name="Birren B.W."/>
        </authorList>
    </citation>
    <scope>NUCLEOTIDE SEQUENCE [LARGE SCALE GENOMIC DNA]</scope>
    <source>
        <strain>DSM 14603 / FGSC 9021 / UM521</strain>
    </source>
</reference>
<reference key="2">
    <citation type="submission" date="2014-09" db="EMBL/GenBank/DDBJ databases">
        <authorList>
            <person name="Gueldener U."/>
            <person name="Muensterkoetter M."/>
            <person name="Walter M.C."/>
            <person name="Mannhaupt G."/>
            <person name="Kahmann R."/>
        </authorList>
    </citation>
    <scope>GENOME REANNOTATION</scope>
    <source>
        <strain>DSM 14603 / FGSC 9021 / UM521</strain>
    </source>
</reference>
<reference key="3">
    <citation type="journal article" date="1992" name="Proc. Natl. Acad. Sci. U.S.A.">
        <title>Classification of fungal chitin synthases.</title>
        <authorList>
            <person name="Bowen A.R."/>
            <person name="Chen-Wu J.L.-P."/>
            <person name="Momany M."/>
            <person name="Young R."/>
            <person name="Szaniszlo P.J."/>
            <person name="Robbins P.W."/>
        </authorList>
    </citation>
    <scope>NUCLEOTIDE SEQUENCE [GENOMIC DNA] OF 238-435</scope>
</reference>
<reference key="4">
    <citation type="journal article" date="2006" name="Plant Cell">
        <title>Polar localizing class V myosin chitin synthases are essential during early plant infection in the plant pathogenic fungus Ustilago maydis.</title>
        <authorList>
            <person name="Weber I."/>
            <person name="Assmann D."/>
            <person name="Thines E."/>
            <person name="Steinberg G."/>
        </authorList>
    </citation>
    <scope>SUBCELLULAR LOCATION</scope>
</reference>
<reference key="5">
    <citation type="journal article" date="2012" name="Curr. Microbiol.">
        <title>Transcriptional regulation of the genes encoding chitin and beta-1,3-glucan synthases from Ustilago maydis.</title>
        <authorList>
            <person name="Robledo-Briones M."/>
            <person name="Ruiz-Herrera J."/>
        </authorList>
    </citation>
    <scope>INDUCTION</scope>
</reference>
<proteinExistence type="evidence at transcript level"/>
<gene>
    <name evidence="6" type="primary">CHS1</name>
    <name type="ORF">UMAG_10718</name>
</gene>
<protein>
    <recommendedName>
        <fullName evidence="6">Chitin synthase 1</fullName>
        <ecNumber evidence="8">2.4.1.16</ecNumber>
    </recommendedName>
    <alternativeName>
        <fullName evidence="7">Chitin-UDP acetyl-glucosaminyl transferase 1</fullName>
    </alternativeName>
</protein>
<name>CHS1_MYCMD</name>
<organism>
    <name type="scientific">Mycosarcoma maydis</name>
    <name type="common">Corn smut fungus</name>
    <name type="synonym">Ustilago maydis</name>
    <dbReference type="NCBI Taxonomy" id="5270"/>
    <lineage>
        <taxon>Eukaryota</taxon>
        <taxon>Fungi</taxon>
        <taxon>Dikarya</taxon>
        <taxon>Basidiomycota</taxon>
        <taxon>Ustilaginomycotina</taxon>
        <taxon>Ustilaginomycetes</taxon>
        <taxon>Ustilaginales</taxon>
        <taxon>Ustilaginaceae</taxon>
        <taxon>Mycosarcoma</taxon>
    </lineage>
</organism>
<evidence type="ECO:0000250" key="1"/>
<evidence type="ECO:0000255" key="2"/>
<evidence type="ECO:0000256" key="3">
    <source>
        <dbReference type="SAM" id="MobiDB-lite"/>
    </source>
</evidence>
<evidence type="ECO:0000269" key="4">
    <source>
    </source>
</evidence>
<evidence type="ECO:0000269" key="5">
    <source>
    </source>
</evidence>
<evidence type="ECO:0000303" key="6">
    <source>
    </source>
</evidence>
<evidence type="ECO:0000305" key="7"/>
<evidence type="ECO:0000305" key="8">
    <source ref="2"/>
</evidence>
<feature type="chain" id="PRO_0000193721" description="Chitin synthase 1">
    <location>
        <begin position="1"/>
        <end position="919"/>
    </location>
</feature>
<feature type="transmembrane region" description="Helical" evidence="2">
    <location>
        <begin position="594"/>
        <end position="614"/>
    </location>
</feature>
<feature type="transmembrane region" description="Helical" evidence="2">
    <location>
        <begin position="630"/>
        <end position="650"/>
    </location>
</feature>
<feature type="transmembrane region" description="Helical" evidence="2">
    <location>
        <begin position="668"/>
        <end position="688"/>
    </location>
</feature>
<feature type="transmembrane region" description="Helical" evidence="2">
    <location>
        <begin position="713"/>
        <end position="733"/>
    </location>
</feature>
<feature type="transmembrane region" description="Helical" evidence="2">
    <location>
        <begin position="742"/>
        <end position="762"/>
    </location>
</feature>
<feature type="transmembrane region" description="Helical" evidence="2">
    <location>
        <begin position="843"/>
        <end position="863"/>
    </location>
</feature>
<feature type="transmembrane region" description="Helical" evidence="2">
    <location>
        <begin position="887"/>
        <end position="919"/>
    </location>
</feature>
<feature type="region of interest" description="Disordered" evidence="3">
    <location>
        <begin position="1"/>
        <end position="69"/>
    </location>
</feature>
<feature type="region of interest" description="Disordered" evidence="3">
    <location>
        <begin position="109"/>
        <end position="134"/>
    </location>
</feature>
<feature type="compositionally biased region" description="Low complexity" evidence="3">
    <location>
        <begin position="11"/>
        <end position="30"/>
    </location>
</feature>
<feature type="glycosylation site" description="N-linked (GlcNAc...) asparagine" evidence="2">
    <location>
        <position position="187"/>
    </location>
</feature>
<feature type="glycosylation site" description="N-linked (GlcNAc...) asparagine" evidence="2">
    <location>
        <position position="556"/>
    </location>
</feature>
<feature type="sequence conflict" description="In Ref. 3; AAA34224." evidence="7" ref="3">
    <original>K</original>
    <variation>E</variation>
    <location>
        <position position="292"/>
    </location>
</feature>
<dbReference type="EC" id="2.4.1.16" evidence="8"/>
<dbReference type="EMBL" id="CM003155">
    <property type="protein sequence ID" value="KIS66849.1"/>
    <property type="molecule type" value="Genomic_DNA"/>
</dbReference>
<dbReference type="EMBL" id="M82958">
    <property type="protein sequence ID" value="AAA34224.1"/>
    <property type="molecule type" value="Genomic_DNA"/>
</dbReference>
<dbReference type="PIR" id="F45189">
    <property type="entry name" value="F45189"/>
</dbReference>
<dbReference type="RefSeq" id="XP_011391524.1">
    <property type="nucleotide sequence ID" value="XM_011393222.1"/>
</dbReference>
<dbReference type="SMR" id="P30598"/>
<dbReference type="STRING" id="237631.P30598"/>
<dbReference type="CAZy" id="GT2">
    <property type="family name" value="Glycosyltransferase Family 2"/>
</dbReference>
<dbReference type="GlyCosmos" id="P30598">
    <property type="glycosylation" value="2 sites, No reported glycans"/>
</dbReference>
<dbReference type="EnsemblFungi" id="KIS66849">
    <property type="protein sequence ID" value="KIS66849"/>
    <property type="gene ID" value="UMAG_10718"/>
</dbReference>
<dbReference type="GeneID" id="23566709"/>
<dbReference type="KEGG" id="uma:UMAG_10718"/>
<dbReference type="VEuPathDB" id="FungiDB:UMAG_10718"/>
<dbReference type="eggNOG" id="KOG2571">
    <property type="taxonomic scope" value="Eukaryota"/>
</dbReference>
<dbReference type="InParanoid" id="P30598"/>
<dbReference type="OrthoDB" id="26569at2759"/>
<dbReference type="BRENDA" id="2.4.1.16">
    <property type="organism ID" value="6587"/>
</dbReference>
<dbReference type="PHI-base" id="PHI:1115"/>
<dbReference type="Proteomes" id="UP000000561">
    <property type="component" value="Chromosome 16"/>
</dbReference>
<dbReference type="GO" id="GO:0071944">
    <property type="term" value="C:cell periphery"/>
    <property type="evidence" value="ECO:0000318"/>
    <property type="project" value="GO_Central"/>
</dbReference>
<dbReference type="GO" id="GO:0030428">
    <property type="term" value="C:cell septum"/>
    <property type="evidence" value="ECO:0000318"/>
    <property type="project" value="GO_Central"/>
</dbReference>
<dbReference type="GO" id="GO:0030659">
    <property type="term" value="C:cytoplasmic vesicle membrane"/>
    <property type="evidence" value="ECO:0007669"/>
    <property type="project" value="UniProtKB-SubCell"/>
</dbReference>
<dbReference type="GO" id="GO:0005886">
    <property type="term" value="C:plasma membrane"/>
    <property type="evidence" value="ECO:0007669"/>
    <property type="project" value="UniProtKB-SubCell"/>
</dbReference>
<dbReference type="GO" id="GO:0004100">
    <property type="term" value="F:chitin synthase activity"/>
    <property type="evidence" value="ECO:0000318"/>
    <property type="project" value="GO_Central"/>
</dbReference>
<dbReference type="GO" id="GO:0071555">
    <property type="term" value="P:cell wall organization"/>
    <property type="evidence" value="ECO:0007669"/>
    <property type="project" value="UniProtKB-KW"/>
</dbReference>
<dbReference type="GO" id="GO:0006031">
    <property type="term" value="P:chitin biosynthetic process"/>
    <property type="evidence" value="ECO:0000318"/>
    <property type="project" value="GO_Central"/>
</dbReference>
<dbReference type="CDD" id="cd04190">
    <property type="entry name" value="Chitin_synth_C"/>
    <property type="match status" value="1"/>
</dbReference>
<dbReference type="InterPro" id="IPR004835">
    <property type="entry name" value="Chitin_synth"/>
</dbReference>
<dbReference type="InterPro" id="IPR004834">
    <property type="entry name" value="Chitin_synth_fun"/>
</dbReference>
<dbReference type="InterPro" id="IPR013616">
    <property type="entry name" value="Chitin_synth_N"/>
</dbReference>
<dbReference type="InterPro" id="IPR029044">
    <property type="entry name" value="Nucleotide-diphossugar_trans"/>
</dbReference>
<dbReference type="PANTHER" id="PTHR22914">
    <property type="entry name" value="CHITIN SYNTHASE"/>
    <property type="match status" value="1"/>
</dbReference>
<dbReference type="PANTHER" id="PTHR22914:SF11">
    <property type="entry name" value="CHITIN SYNTHASE B"/>
    <property type="match status" value="1"/>
</dbReference>
<dbReference type="Pfam" id="PF01644">
    <property type="entry name" value="Chitin_synth_1"/>
    <property type="match status" value="1"/>
</dbReference>
<dbReference type="Pfam" id="PF08407">
    <property type="entry name" value="Chitin_synth_1N"/>
    <property type="match status" value="1"/>
</dbReference>
<dbReference type="SUPFAM" id="SSF53448">
    <property type="entry name" value="Nucleotide-diphospho-sugar transferases"/>
    <property type="match status" value="1"/>
</dbReference>
<comment type="function">
    <text evidence="8">Polymerizes chitin, a structural polymer of the cell wall and septum, by transferring the sugar moiety of UDP-GlcNAc to the non-reducing end of the growing chitin polymer.</text>
</comment>
<comment type="catalytic activity">
    <reaction evidence="8">
        <text>[(1-&gt;4)-N-acetyl-beta-D-glucosaminyl](n) + UDP-N-acetyl-alpha-D-glucosamine = [(1-&gt;4)-N-acetyl-beta-D-glucosaminyl](n+1) + UDP + H(+)</text>
        <dbReference type="Rhea" id="RHEA:16637"/>
        <dbReference type="Rhea" id="RHEA-COMP:9593"/>
        <dbReference type="Rhea" id="RHEA-COMP:9595"/>
        <dbReference type="ChEBI" id="CHEBI:15378"/>
        <dbReference type="ChEBI" id="CHEBI:17029"/>
        <dbReference type="ChEBI" id="CHEBI:57705"/>
        <dbReference type="ChEBI" id="CHEBI:58223"/>
        <dbReference type="EC" id="2.4.1.16"/>
    </reaction>
    <physiologicalReaction direction="left-to-right" evidence="8">
        <dbReference type="Rhea" id="RHEA:16638"/>
    </physiologicalReaction>
</comment>
<comment type="subcellular location">
    <subcellularLocation>
        <location evidence="4">Cell membrane</location>
        <topology evidence="4">Multi-pass membrane protein</topology>
    </subcellularLocation>
    <subcellularLocation>
        <location evidence="4">Cytoplasmic vesicle membrane</location>
        <topology evidence="4">Multi-pass membrane protein</topology>
    </subcellularLocation>
    <text evidence="1">A constitutive cytoplasmic pool is present that localizes to intracellular microvesicles termed chitosomes. Chitosomes constitute a separate secretory route distinct from the typical secretory pathway and serve as a vehicle for delivering the enzyme to the sites on the cell surface where polysaccharide sythesis takes place (By similarity). Localizes to septa of yeast-like cells and to the basal septum separating the living tip cell from the vacuolated part in hyphae.</text>
</comment>
<comment type="induction">
    <text evidence="5">Expression is slightly lower in the yeast form than in the mycelium and shows a maximal expression in the log phase at about 14-18 h of incubation.</text>
</comment>
<comment type="similarity">
    <text evidence="7">Belongs to the chitin synthase family. Class III subfamily.</text>
</comment>
<accession>P30598</accession>
<accession>A0A0D1DR09</accession>
<accession>Q4P2M6</accession>